<proteinExistence type="inferred from homology"/>
<organism>
    <name type="scientific">Bacillus cereus (strain ATCC 10987 / NRS 248)</name>
    <dbReference type="NCBI Taxonomy" id="222523"/>
    <lineage>
        <taxon>Bacteria</taxon>
        <taxon>Bacillati</taxon>
        <taxon>Bacillota</taxon>
        <taxon>Bacilli</taxon>
        <taxon>Bacillales</taxon>
        <taxon>Bacillaceae</taxon>
        <taxon>Bacillus</taxon>
        <taxon>Bacillus cereus group</taxon>
    </lineage>
</organism>
<sequence length="49" mass="5919">MRVNITLACTECGDRNYISKKNKRNNPERIELKKYCPRLKRVTLHRETK</sequence>
<name>RL333_BACC1</name>
<dbReference type="EMBL" id="AE017194">
    <property type="protein sequence ID" value="AAS43325.1"/>
    <property type="molecule type" value="Genomic_DNA"/>
</dbReference>
<dbReference type="SMR" id="Q730J2"/>
<dbReference type="KEGG" id="bca:BCE_4424"/>
<dbReference type="HOGENOM" id="CLU_190949_0_2_9"/>
<dbReference type="Proteomes" id="UP000002527">
    <property type="component" value="Chromosome"/>
</dbReference>
<dbReference type="GO" id="GO:0005737">
    <property type="term" value="C:cytoplasm"/>
    <property type="evidence" value="ECO:0007669"/>
    <property type="project" value="UniProtKB-ARBA"/>
</dbReference>
<dbReference type="GO" id="GO:1990904">
    <property type="term" value="C:ribonucleoprotein complex"/>
    <property type="evidence" value="ECO:0007669"/>
    <property type="project" value="UniProtKB-KW"/>
</dbReference>
<dbReference type="GO" id="GO:0005840">
    <property type="term" value="C:ribosome"/>
    <property type="evidence" value="ECO:0007669"/>
    <property type="project" value="UniProtKB-KW"/>
</dbReference>
<dbReference type="GO" id="GO:0003735">
    <property type="term" value="F:structural constituent of ribosome"/>
    <property type="evidence" value="ECO:0007669"/>
    <property type="project" value="InterPro"/>
</dbReference>
<dbReference type="GO" id="GO:0006412">
    <property type="term" value="P:translation"/>
    <property type="evidence" value="ECO:0007669"/>
    <property type="project" value="UniProtKB-UniRule"/>
</dbReference>
<dbReference type="Gene3D" id="2.20.28.120">
    <property type="entry name" value="Ribosomal protein L33"/>
    <property type="match status" value="1"/>
</dbReference>
<dbReference type="HAMAP" id="MF_00294">
    <property type="entry name" value="Ribosomal_bL33"/>
    <property type="match status" value="1"/>
</dbReference>
<dbReference type="InterPro" id="IPR001705">
    <property type="entry name" value="Ribosomal_bL33"/>
</dbReference>
<dbReference type="InterPro" id="IPR018264">
    <property type="entry name" value="Ribosomal_bL33_CS"/>
</dbReference>
<dbReference type="InterPro" id="IPR038584">
    <property type="entry name" value="Ribosomal_bL33_sf"/>
</dbReference>
<dbReference type="InterPro" id="IPR011332">
    <property type="entry name" value="Ribosomal_zn-bd"/>
</dbReference>
<dbReference type="NCBIfam" id="NF001764">
    <property type="entry name" value="PRK00504.1"/>
    <property type="match status" value="1"/>
</dbReference>
<dbReference type="NCBIfam" id="NF001860">
    <property type="entry name" value="PRK00595.1"/>
    <property type="match status" value="1"/>
</dbReference>
<dbReference type="NCBIfam" id="TIGR01023">
    <property type="entry name" value="rpmG_bact"/>
    <property type="match status" value="1"/>
</dbReference>
<dbReference type="PANTHER" id="PTHR43168">
    <property type="entry name" value="50S RIBOSOMAL PROTEIN L33, CHLOROPLASTIC"/>
    <property type="match status" value="1"/>
</dbReference>
<dbReference type="PANTHER" id="PTHR43168:SF2">
    <property type="entry name" value="LARGE RIBOSOMAL SUBUNIT PROTEIN BL33C"/>
    <property type="match status" value="1"/>
</dbReference>
<dbReference type="Pfam" id="PF00471">
    <property type="entry name" value="Ribosomal_L33"/>
    <property type="match status" value="1"/>
</dbReference>
<dbReference type="SUPFAM" id="SSF57829">
    <property type="entry name" value="Zn-binding ribosomal proteins"/>
    <property type="match status" value="1"/>
</dbReference>
<dbReference type="PROSITE" id="PS00582">
    <property type="entry name" value="RIBOSOMAL_L33"/>
    <property type="match status" value="1"/>
</dbReference>
<reference key="1">
    <citation type="journal article" date="2004" name="Nucleic Acids Res.">
        <title>The genome sequence of Bacillus cereus ATCC 10987 reveals metabolic adaptations and a large plasmid related to Bacillus anthracis pXO1.</title>
        <authorList>
            <person name="Rasko D.A."/>
            <person name="Ravel J."/>
            <person name="Oekstad O.A."/>
            <person name="Helgason E."/>
            <person name="Cer R.Z."/>
            <person name="Jiang L."/>
            <person name="Shores K.A."/>
            <person name="Fouts D.E."/>
            <person name="Tourasse N.J."/>
            <person name="Angiuoli S.V."/>
            <person name="Kolonay J.F."/>
            <person name="Nelson W.C."/>
            <person name="Kolstoe A.-B."/>
            <person name="Fraser C.M."/>
            <person name="Read T.D."/>
        </authorList>
    </citation>
    <scope>NUCLEOTIDE SEQUENCE [LARGE SCALE GENOMIC DNA]</scope>
    <source>
        <strain>ATCC 10987 / NRS 248</strain>
    </source>
</reference>
<accession>Q730J2</accession>
<protein>
    <recommendedName>
        <fullName evidence="1">Large ribosomal subunit protein bL33C</fullName>
    </recommendedName>
    <alternativeName>
        <fullName evidence="1">50S ribosomal protein L33 3</fullName>
    </alternativeName>
</protein>
<keyword id="KW-0687">Ribonucleoprotein</keyword>
<keyword id="KW-0689">Ribosomal protein</keyword>
<comment type="similarity">
    <text evidence="1">Belongs to the bacterial ribosomal protein bL33 family.</text>
</comment>
<feature type="chain" id="PRO_0000356384" description="Large ribosomal subunit protein bL33C">
    <location>
        <begin position="1"/>
        <end position="49"/>
    </location>
</feature>
<evidence type="ECO:0000255" key="1">
    <source>
        <dbReference type="HAMAP-Rule" id="MF_00294"/>
    </source>
</evidence>
<gene>
    <name evidence="1" type="primary">rpmG3</name>
    <name type="ordered locus">BCE_4424</name>
</gene>